<reference key="1">
    <citation type="submission" date="2006-10" db="EMBL/GenBank/DDBJ databases">
        <authorList>
            <consortium name="Sanger Xenopus tropicalis EST/cDNA project"/>
        </authorList>
    </citation>
    <scope>NUCLEOTIDE SEQUENCE [LARGE SCALE MRNA]</scope>
    <source>
        <tissue>Egg</tissue>
    </source>
</reference>
<reference key="2">
    <citation type="submission" date="2006-11" db="EMBL/GenBank/DDBJ databases">
        <authorList>
            <consortium name="NIH - Xenopus Gene Collection (XGC) project"/>
        </authorList>
    </citation>
    <scope>NUCLEOTIDE SEQUENCE [LARGE SCALE MRNA]</scope>
    <source>
        <tissue>Testis</tissue>
    </source>
</reference>
<protein>
    <recommendedName>
        <fullName evidence="1">Probable cytosolic iron-sulfur protein assembly protein ciao1</fullName>
    </recommendedName>
    <alternativeName>
        <fullName evidence="1">WD repeat-containing protein 39</fullName>
    </alternativeName>
</protein>
<comment type="function">
    <text evidence="1">Key component of the cytosolic iron-sulfur protein assembly (CIA) complex, a multiprotein complex that mediates the incorporation of iron-sulfur cluster into extramitochondrial Fe/S proteins.</text>
</comment>
<comment type="subunit">
    <text evidence="1">Component of the CIA complex.</text>
</comment>
<comment type="similarity">
    <text evidence="1">Belongs to the WD repeat CIA1 family.</text>
</comment>
<accession>Q28DW0</accession>
<name>CIAO1_XENTR</name>
<feature type="chain" id="PRO_0000281109" description="Probable cytosolic iron-sulfur protein assembly protein ciao1">
    <location>
        <begin position="1"/>
        <end position="333"/>
    </location>
</feature>
<feature type="repeat" description="WD 1">
    <location>
        <begin position="14"/>
        <end position="53"/>
    </location>
</feature>
<feature type="repeat" description="WD 2">
    <location>
        <begin position="59"/>
        <end position="98"/>
    </location>
</feature>
<feature type="repeat" description="WD 3">
    <location>
        <begin position="103"/>
        <end position="142"/>
    </location>
</feature>
<feature type="repeat" description="WD 4">
    <location>
        <begin position="148"/>
        <end position="187"/>
    </location>
</feature>
<feature type="repeat" description="WD 5">
    <location>
        <begin position="192"/>
        <end position="231"/>
    </location>
</feature>
<feature type="repeat" description="WD 6">
    <location>
        <begin position="246"/>
        <end position="285"/>
    </location>
</feature>
<feature type="repeat" description="WD 7">
    <location>
        <begin position="297"/>
        <end position="333"/>
    </location>
</feature>
<gene>
    <name type="primary">ciao1</name>
    <name type="synonym">wdr39</name>
    <name type="ORF">TEgg053g13.1</name>
</gene>
<keyword id="KW-1185">Reference proteome</keyword>
<keyword id="KW-0677">Repeat</keyword>
<keyword id="KW-0853">WD repeat</keyword>
<sequence>MKDTLTLLSRVSAHPDSRCWFLAWNPSGTLLASCGGDRTIRIWGKDGDNWVCKSVLGEGHQRTVRKVSWSPCGNYLASASFDATTCIWMKKKEEFECITTLEGHENEVKSVAWAPSGSLLATCSRDKSVWVWEVDEEEEYECVSVLNSHTQDVKHVVWHPNQELLASASYDDSVKLYREEEDDWVCCATLEGHTSTVWSLAFDQTGEQLATCSDDKTVRIWRQLGTGEQGSKSDPNWKCVCTLTGYHTRTVYDVNWNHLTGAIATACGDDAVRIFEEDPGSDPLQPTFSLTAHMPRAHTQDVNCVTWHPKEPNLLASCSDDGEMAFWRYQKPE</sequence>
<organism>
    <name type="scientific">Xenopus tropicalis</name>
    <name type="common">Western clawed frog</name>
    <name type="synonym">Silurana tropicalis</name>
    <dbReference type="NCBI Taxonomy" id="8364"/>
    <lineage>
        <taxon>Eukaryota</taxon>
        <taxon>Metazoa</taxon>
        <taxon>Chordata</taxon>
        <taxon>Craniata</taxon>
        <taxon>Vertebrata</taxon>
        <taxon>Euteleostomi</taxon>
        <taxon>Amphibia</taxon>
        <taxon>Batrachia</taxon>
        <taxon>Anura</taxon>
        <taxon>Pipoidea</taxon>
        <taxon>Pipidae</taxon>
        <taxon>Xenopodinae</taxon>
        <taxon>Xenopus</taxon>
        <taxon>Silurana</taxon>
    </lineage>
</organism>
<dbReference type="EMBL" id="CR848572">
    <property type="protein sequence ID" value="CAJ81275.1"/>
    <property type="molecule type" value="mRNA"/>
</dbReference>
<dbReference type="EMBL" id="BC127279">
    <property type="protein sequence ID" value="AAI27280.1"/>
    <property type="molecule type" value="mRNA"/>
</dbReference>
<dbReference type="RefSeq" id="NP_001016887.1">
    <property type="nucleotide sequence ID" value="NM_001016887.2"/>
</dbReference>
<dbReference type="SMR" id="Q28DW0"/>
<dbReference type="FunCoup" id="Q28DW0">
    <property type="interactions" value="2096"/>
</dbReference>
<dbReference type="STRING" id="8364.ENSXETP00000034798"/>
<dbReference type="PaxDb" id="8364-ENSXETP00000009442"/>
<dbReference type="DNASU" id="549641"/>
<dbReference type="GeneID" id="549641"/>
<dbReference type="KEGG" id="xtr:549641"/>
<dbReference type="AGR" id="Xenbase:XB-GENE-1010751"/>
<dbReference type="CTD" id="9391"/>
<dbReference type="Xenbase" id="XB-GENE-1010751">
    <property type="gene designation" value="ciao1"/>
</dbReference>
<dbReference type="eggNOG" id="KOG0645">
    <property type="taxonomic scope" value="Eukaryota"/>
</dbReference>
<dbReference type="HOGENOM" id="CLU_000288_57_8_1"/>
<dbReference type="InParanoid" id="Q28DW0"/>
<dbReference type="OrthoDB" id="284782at2759"/>
<dbReference type="TreeFam" id="TF318181"/>
<dbReference type="Proteomes" id="UP000008143">
    <property type="component" value="Chromosome 3"/>
</dbReference>
<dbReference type="Bgee" id="ENSXETG00000004336">
    <property type="expression patterns" value="Expressed in brain and 14 other cell types or tissues"/>
</dbReference>
<dbReference type="GO" id="GO:0097361">
    <property type="term" value="C:cytosolic [4Fe-4S] assembly targeting complex"/>
    <property type="evidence" value="ECO:0000250"/>
    <property type="project" value="UniProtKB"/>
</dbReference>
<dbReference type="GO" id="GO:0016226">
    <property type="term" value="P:iron-sulfur cluster assembly"/>
    <property type="evidence" value="ECO:0007669"/>
    <property type="project" value="UniProtKB-UniRule"/>
</dbReference>
<dbReference type="GO" id="GO:0051604">
    <property type="term" value="P:protein maturation"/>
    <property type="evidence" value="ECO:0000250"/>
    <property type="project" value="UniProtKB"/>
</dbReference>
<dbReference type="CDD" id="cd00200">
    <property type="entry name" value="WD40"/>
    <property type="match status" value="1"/>
</dbReference>
<dbReference type="FunFam" id="2.130.10.10:FF:000136">
    <property type="entry name" value="Probable cytosolic iron-sulfur protein assembly protein CIAO1"/>
    <property type="match status" value="1"/>
</dbReference>
<dbReference type="Gene3D" id="2.130.10.10">
    <property type="entry name" value="YVTN repeat-like/Quinoprotein amine dehydrogenase"/>
    <property type="match status" value="1"/>
</dbReference>
<dbReference type="HAMAP" id="MF_03037">
    <property type="entry name" value="ciao1"/>
    <property type="match status" value="1"/>
</dbReference>
<dbReference type="InterPro" id="IPR028608">
    <property type="entry name" value="CIAO1/Cia1"/>
</dbReference>
<dbReference type="InterPro" id="IPR015943">
    <property type="entry name" value="WD40/YVTN_repeat-like_dom_sf"/>
</dbReference>
<dbReference type="InterPro" id="IPR019775">
    <property type="entry name" value="WD40_repeat_CS"/>
</dbReference>
<dbReference type="InterPro" id="IPR036322">
    <property type="entry name" value="WD40_repeat_dom_sf"/>
</dbReference>
<dbReference type="InterPro" id="IPR001680">
    <property type="entry name" value="WD40_rpt"/>
</dbReference>
<dbReference type="PANTHER" id="PTHR19920:SF0">
    <property type="entry name" value="CYTOSOLIC IRON-SULFUR PROTEIN ASSEMBLY PROTEIN CIAO1-RELATED"/>
    <property type="match status" value="1"/>
</dbReference>
<dbReference type="PANTHER" id="PTHR19920">
    <property type="entry name" value="WD40 PROTEIN CIAO1"/>
    <property type="match status" value="1"/>
</dbReference>
<dbReference type="Pfam" id="PF00400">
    <property type="entry name" value="WD40"/>
    <property type="match status" value="7"/>
</dbReference>
<dbReference type="SMART" id="SM00320">
    <property type="entry name" value="WD40"/>
    <property type="match status" value="7"/>
</dbReference>
<dbReference type="SUPFAM" id="SSF50978">
    <property type="entry name" value="WD40 repeat-like"/>
    <property type="match status" value="1"/>
</dbReference>
<dbReference type="PROSITE" id="PS00678">
    <property type="entry name" value="WD_REPEATS_1"/>
    <property type="match status" value="1"/>
</dbReference>
<dbReference type="PROSITE" id="PS50082">
    <property type="entry name" value="WD_REPEATS_2"/>
    <property type="match status" value="6"/>
</dbReference>
<dbReference type="PROSITE" id="PS50294">
    <property type="entry name" value="WD_REPEATS_REGION"/>
    <property type="match status" value="1"/>
</dbReference>
<proteinExistence type="evidence at transcript level"/>
<evidence type="ECO:0000255" key="1">
    <source>
        <dbReference type="HAMAP-Rule" id="MF_03037"/>
    </source>
</evidence>